<reference key="1">
    <citation type="journal article" date="1997" name="Regul. Pept.">
        <title>Isolation and structural elucidation of eight kinins from the retrocerebral complex of the American cockroach, Periplaneta americana.</title>
        <authorList>
            <person name="Predel R."/>
            <person name="Kellner R."/>
            <person name="Rapus J."/>
            <person name="Penzlin H."/>
            <person name="Gade G."/>
        </authorList>
    </citation>
    <scope>PROTEIN SEQUENCE</scope>
    <scope>FUNCTION</scope>
    <scope>MASS SPECTROMETRY</scope>
    <scope>AMIDATION AT GLY-8</scope>
    <source>
        <tissue>Corpora cardiaca</tissue>
    </source>
</reference>
<dbReference type="GO" id="GO:0005576">
    <property type="term" value="C:extracellular region"/>
    <property type="evidence" value="ECO:0007669"/>
    <property type="project" value="UniProtKB-SubCell"/>
</dbReference>
<dbReference type="GO" id="GO:0007218">
    <property type="term" value="P:neuropeptide signaling pathway"/>
    <property type="evidence" value="ECO:0007669"/>
    <property type="project" value="UniProtKB-KW"/>
</dbReference>
<organism>
    <name type="scientific">Periplaneta americana</name>
    <name type="common">American cockroach</name>
    <name type="synonym">Blatta americana</name>
    <dbReference type="NCBI Taxonomy" id="6978"/>
    <lineage>
        <taxon>Eukaryota</taxon>
        <taxon>Metazoa</taxon>
        <taxon>Ecdysozoa</taxon>
        <taxon>Arthropoda</taxon>
        <taxon>Hexapoda</taxon>
        <taxon>Insecta</taxon>
        <taxon>Pterygota</taxon>
        <taxon>Neoptera</taxon>
        <taxon>Polyneoptera</taxon>
        <taxon>Dictyoptera</taxon>
        <taxon>Blattodea</taxon>
        <taxon>Blattoidea</taxon>
        <taxon>Blattidae</taxon>
        <taxon>Blattinae</taxon>
        <taxon>Periplaneta</taxon>
    </lineage>
</organism>
<protein>
    <recommendedName>
        <fullName>Kinin-4</fullName>
    </recommendedName>
    <alternativeName>
        <fullName>Pea-K-4</fullName>
    </alternativeName>
</protein>
<feature type="peptide" id="PRO_0000043965" description="Kinin-4">
    <location>
        <begin position="1"/>
        <end position="8"/>
    </location>
</feature>
<feature type="modified residue" description="Glycine amide" evidence="1">
    <location>
        <position position="8"/>
    </location>
</feature>
<proteinExistence type="evidence at protein level"/>
<sequence length="8" mass="839">GAQFSSWG</sequence>
<name>KINI4_PERAM</name>
<comment type="function">
    <text evidence="1">Mediates visceral muscle contractile activity (myotropic activity).</text>
</comment>
<comment type="subcellular location">
    <subcellularLocation>
        <location>Secreted</location>
    </subcellularLocation>
</comment>
<comment type="mass spectrometry" mass="838.15" method="Electrospray" evidence="1"/>
<comment type="similarity">
    <text evidence="2">Belongs to the kinin family.</text>
</comment>
<evidence type="ECO:0000269" key="1">
    <source>
    </source>
</evidence>
<evidence type="ECO:0000305" key="2"/>
<accession>P82688</accession>
<keyword id="KW-0027">Amidation</keyword>
<keyword id="KW-0903">Direct protein sequencing</keyword>
<keyword id="KW-0527">Neuropeptide</keyword>
<keyword id="KW-0964">Secreted</keyword>